<sequence length="81" mass="9347">MGKINLMLRQIVCLPIKMYQYFISPLITPCCRYYPSCSEYADSAIKHYGVIKGLLMALNRLSRCHPWSKGGYDPLFPNDKN</sequence>
<accession>Q5WSE8</accession>
<proteinExistence type="inferred from homology"/>
<name>YIDD_LEGPL</name>
<feature type="chain" id="PRO_0000253119" description="Putative membrane protein insertion efficiency factor">
    <location>
        <begin position="1"/>
        <end position="81"/>
    </location>
</feature>
<organism>
    <name type="scientific">Legionella pneumophila (strain Lens)</name>
    <dbReference type="NCBI Taxonomy" id="297245"/>
    <lineage>
        <taxon>Bacteria</taxon>
        <taxon>Pseudomonadati</taxon>
        <taxon>Pseudomonadota</taxon>
        <taxon>Gammaproteobacteria</taxon>
        <taxon>Legionellales</taxon>
        <taxon>Legionellaceae</taxon>
        <taxon>Legionella</taxon>
    </lineage>
</organism>
<evidence type="ECO:0000255" key="1">
    <source>
        <dbReference type="HAMAP-Rule" id="MF_00386"/>
    </source>
</evidence>
<keyword id="KW-0997">Cell inner membrane</keyword>
<keyword id="KW-1003">Cell membrane</keyword>
<keyword id="KW-0472">Membrane</keyword>
<comment type="function">
    <text evidence="1">Could be involved in insertion of integral membrane proteins into the membrane.</text>
</comment>
<comment type="subcellular location">
    <subcellularLocation>
        <location evidence="1">Cell inner membrane</location>
        <topology evidence="1">Peripheral membrane protein</topology>
        <orientation evidence="1">Cytoplasmic side</orientation>
    </subcellularLocation>
</comment>
<comment type="similarity">
    <text evidence="1">Belongs to the UPF0161 family.</text>
</comment>
<reference key="1">
    <citation type="journal article" date="2004" name="Nat. Genet.">
        <title>Evidence in the Legionella pneumophila genome for exploitation of host cell functions and high genome plasticity.</title>
        <authorList>
            <person name="Cazalet C."/>
            <person name="Rusniok C."/>
            <person name="Brueggemann H."/>
            <person name="Zidane N."/>
            <person name="Magnier A."/>
            <person name="Ma L."/>
            <person name="Tichit M."/>
            <person name="Jarraud S."/>
            <person name="Bouchier C."/>
            <person name="Vandenesch F."/>
            <person name="Kunst F."/>
            <person name="Etienne J."/>
            <person name="Glaser P."/>
            <person name="Buchrieser C."/>
        </authorList>
    </citation>
    <scope>NUCLEOTIDE SEQUENCE [LARGE SCALE GENOMIC DNA]</scope>
    <source>
        <strain>Lens</strain>
    </source>
</reference>
<protein>
    <recommendedName>
        <fullName evidence="1">Putative membrane protein insertion efficiency factor</fullName>
    </recommendedName>
</protein>
<gene>
    <name type="ordered locus">lpl2931</name>
</gene>
<dbReference type="EMBL" id="CR628337">
    <property type="protein sequence ID" value="CAH17175.1"/>
    <property type="molecule type" value="Genomic_DNA"/>
</dbReference>
<dbReference type="KEGG" id="lpf:lpl2931"/>
<dbReference type="LegioList" id="lpl2931"/>
<dbReference type="HOGENOM" id="CLU_144811_6_0_6"/>
<dbReference type="Proteomes" id="UP000002517">
    <property type="component" value="Chromosome"/>
</dbReference>
<dbReference type="GO" id="GO:0005886">
    <property type="term" value="C:plasma membrane"/>
    <property type="evidence" value="ECO:0007669"/>
    <property type="project" value="UniProtKB-SubCell"/>
</dbReference>
<dbReference type="HAMAP" id="MF_00386">
    <property type="entry name" value="UPF0161_YidD"/>
    <property type="match status" value="1"/>
</dbReference>
<dbReference type="InterPro" id="IPR002696">
    <property type="entry name" value="Membr_insert_effic_factor_YidD"/>
</dbReference>
<dbReference type="NCBIfam" id="TIGR00278">
    <property type="entry name" value="membrane protein insertion efficiency factor YidD"/>
    <property type="match status" value="1"/>
</dbReference>
<dbReference type="PANTHER" id="PTHR33383">
    <property type="entry name" value="MEMBRANE PROTEIN INSERTION EFFICIENCY FACTOR-RELATED"/>
    <property type="match status" value="1"/>
</dbReference>
<dbReference type="PANTHER" id="PTHR33383:SF1">
    <property type="entry name" value="MEMBRANE PROTEIN INSERTION EFFICIENCY FACTOR-RELATED"/>
    <property type="match status" value="1"/>
</dbReference>
<dbReference type="Pfam" id="PF01809">
    <property type="entry name" value="YidD"/>
    <property type="match status" value="1"/>
</dbReference>
<dbReference type="SMART" id="SM01234">
    <property type="entry name" value="Haemolytic"/>
    <property type="match status" value="1"/>
</dbReference>